<organism>
    <name type="scientific">Acinetobacter baumannii (strain ACICU)</name>
    <dbReference type="NCBI Taxonomy" id="405416"/>
    <lineage>
        <taxon>Bacteria</taxon>
        <taxon>Pseudomonadati</taxon>
        <taxon>Pseudomonadota</taxon>
        <taxon>Gammaproteobacteria</taxon>
        <taxon>Moraxellales</taxon>
        <taxon>Moraxellaceae</taxon>
        <taxon>Acinetobacter</taxon>
        <taxon>Acinetobacter calcoaceticus/baumannii complex</taxon>
    </lineage>
</organism>
<comment type="function">
    <text evidence="1">Involved in the binding of tRNA to the ribosomes.</text>
</comment>
<comment type="subunit">
    <text evidence="1">Part of the 30S ribosomal subunit.</text>
</comment>
<comment type="similarity">
    <text evidence="1">Belongs to the universal ribosomal protein uS10 family.</text>
</comment>
<gene>
    <name evidence="1" type="primary">rpsJ</name>
    <name type="ordered locus">ACICU_03281</name>
</gene>
<accession>B2HZM3</accession>
<feature type="chain" id="PRO_1000127067" description="Small ribosomal subunit protein uS10">
    <location>
        <begin position="1"/>
        <end position="103"/>
    </location>
</feature>
<dbReference type="EMBL" id="CP000863">
    <property type="protein sequence ID" value="ACC58591.1"/>
    <property type="molecule type" value="Genomic_DNA"/>
</dbReference>
<dbReference type="RefSeq" id="WP_000070912.1">
    <property type="nucleotide sequence ID" value="NZ_CP031380.1"/>
</dbReference>
<dbReference type="SMR" id="B2HZM3"/>
<dbReference type="GeneID" id="97425198"/>
<dbReference type="KEGG" id="abc:ACICU_03281"/>
<dbReference type="HOGENOM" id="CLU_122625_1_3_6"/>
<dbReference type="Proteomes" id="UP000008839">
    <property type="component" value="Chromosome"/>
</dbReference>
<dbReference type="GO" id="GO:1990904">
    <property type="term" value="C:ribonucleoprotein complex"/>
    <property type="evidence" value="ECO:0007669"/>
    <property type="project" value="UniProtKB-KW"/>
</dbReference>
<dbReference type="GO" id="GO:0005840">
    <property type="term" value="C:ribosome"/>
    <property type="evidence" value="ECO:0007669"/>
    <property type="project" value="UniProtKB-KW"/>
</dbReference>
<dbReference type="GO" id="GO:0003735">
    <property type="term" value="F:structural constituent of ribosome"/>
    <property type="evidence" value="ECO:0007669"/>
    <property type="project" value="InterPro"/>
</dbReference>
<dbReference type="GO" id="GO:0000049">
    <property type="term" value="F:tRNA binding"/>
    <property type="evidence" value="ECO:0007669"/>
    <property type="project" value="UniProtKB-UniRule"/>
</dbReference>
<dbReference type="GO" id="GO:0006412">
    <property type="term" value="P:translation"/>
    <property type="evidence" value="ECO:0007669"/>
    <property type="project" value="UniProtKB-UniRule"/>
</dbReference>
<dbReference type="FunFam" id="3.30.70.600:FF:000001">
    <property type="entry name" value="30S ribosomal protein S10"/>
    <property type="match status" value="1"/>
</dbReference>
<dbReference type="Gene3D" id="3.30.70.600">
    <property type="entry name" value="Ribosomal protein S10 domain"/>
    <property type="match status" value="1"/>
</dbReference>
<dbReference type="HAMAP" id="MF_00508">
    <property type="entry name" value="Ribosomal_uS10"/>
    <property type="match status" value="1"/>
</dbReference>
<dbReference type="InterPro" id="IPR001848">
    <property type="entry name" value="Ribosomal_uS10"/>
</dbReference>
<dbReference type="InterPro" id="IPR018268">
    <property type="entry name" value="Ribosomal_uS10_CS"/>
</dbReference>
<dbReference type="InterPro" id="IPR027486">
    <property type="entry name" value="Ribosomal_uS10_dom"/>
</dbReference>
<dbReference type="InterPro" id="IPR036838">
    <property type="entry name" value="Ribosomal_uS10_dom_sf"/>
</dbReference>
<dbReference type="NCBIfam" id="NF001861">
    <property type="entry name" value="PRK00596.1"/>
    <property type="match status" value="1"/>
</dbReference>
<dbReference type="NCBIfam" id="TIGR01049">
    <property type="entry name" value="rpsJ_bact"/>
    <property type="match status" value="1"/>
</dbReference>
<dbReference type="PANTHER" id="PTHR11700">
    <property type="entry name" value="30S RIBOSOMAL PROTEIN S10 FAMILY MEMBER"/>
    <property type="match status" value="1"/>
</dbReference>
<dbReference type="Pfam" id="PF00338">
    <property type="entry name" value="Ribosomal_S10"/>
    <property type="match status" value="1"/>
</dbReference>
<dbReference type="PRINTS" id="PR00971">
    <property type="entry name" value="RIBOSOMALS10"/>
</dbReference>
<dbReference type="SMART" id="SM01403">
    <property type="entry name" value="Ribosomal_S10"/>
    <property type="match status" value="1"/>
</dbReference>
<dbReference type="SUPFAM" id="SSF54999">
    <property type="entry name" value="Ribosomal protein S10"/>
    <property type="match status" value="1"/>
</dbReference>
<dbReference type="PROSITE" id="PS00361">
    <property type="entry name" value="RIBOSOMAL_S10"/>
    <property type="match status" value="1"/>
</dbReference>
<protein>
    <recommendedName>
        <fullName evidence="1">Small ribosomal subunit protein uS10</fullName>
    </recommendedName>
    <alternativeName>
        <fullName evidence="2">30S ribosomal protein S10</fullName>
    </alternativeName>
</protein>
<reference key="1">
    <citation type="journal article" date="2008" name="Antimicrob. Agents Chemother.">
        <title>Whole-genome pyrosequencing of an epidemic multidrug-resistant Acinetobacter baumannii strain belonging to the European clone II group.</title>
        <authorList>
            <person name="Iacono M."/>
            <person name="Villa L."/>
            <person name="Fortini D."/>
            <person name="Bordoni R."/>
            <person name="Imperi F."/>
            <person name="Bonnal R.J."/>
            <person name="Sicheritz-Ponten T."/>
            <person name="De Bellis G."/>
            <person name="Visca P."/>
            <person name="Cassone A."/>
            <person name="Carattoli A."/>
        </authorList>
    </citation>
    <scope>NUCLEOTIDE SEQUENCE [LARGE SCALE GENOMIC DNA]</scope>
    <source>
        <strain>ACICU</strain>
    </source>
</reference>
<evidence type="ECO:0000255" key="1">
    <source>
        <dbReference type="HAMAP-Rule" id="MF_00508"/>
    </source>
</evidence>
<evidence type="ECO:0000305" key="2"/>
<name>RS10_ACIBC</name>
<proteinExistence type="inferred from homology"/>
<sequence length="103" mass="11701">MSNQRIRIRLKSFDHRLIDQSAQEIVETAKRTGAQVCGPIPMPTRIERFNVLTSPHVNKDARDQYEIRTYKRLIDIVQPTDKTVDALMKLDLAAGVDVQIALG</sequence>
<keyword id="KW-0687">Ribonucleoprotein</keyword>
<keyword id="KW-0689">Ribosomal protein</keyword>